<protein>
    <recommendedName>
        <fullName evidence="1">Small ribosomal subunit protein bS18</fullName>
    </recommendedName>
    <alternativeName>
        <fullName evidence="3">30S ribosomal protein S18</fullName>
    </alternativeName>
</protein>
<sequence>MDLENTENVENNNNNEEEVKAKGERKAHFNKELNEKDGRKKFFKKKVCYFCKNNIDVLDYKDIKLLKRYVKDSGKIIPKRLNGTCSKHQRLVTKAIKRARNIALLPYETRY</sequence>
<gene>
    <name evidence="1" type="primary">rpsR</name>
    <name type="ordered locus">BHWA1_01033</name>
</gene>
<comment type="function">
    <text evidence="1">Binds as a heterodimer with protein bS6 to the central domain of the 16S rRNA, where it helps stabilize the platform of the 30S subunit.</text>
</comment>
<comment type="subunit">
    <text evidence="1">Part of the 30S ribosomal subunit. Forms a tight heterodimer with protein bS6.</text>
</comment>
<comment type="similarity">
    <text evidence="1">Belongs to the bacterial ribosomal protein bS18 family.</text>
</comment>
<accession>C0R078</accession>
<name>RS18_BRAHW</name>
<evidence type="ECO:0000255" key="1">
    <source>
        <dbReference type="HAMAP-Rule" id="MF_00270"/>
    </source>
</evidence>
<evidence type="ECO:0000256" key="2">
    <source>
        <dbReference type="SAM" id="MobiDB-lite"/>
    </source>
</evidence>
<evidence type="ECO:0000305" key="3"/>
<dbReference type="EMBL" id="CP001357">
    <property type="protein sequence ID" value="ACN83516.1"/>
    <property type="molecule type" value="Genomic_DNA"/>
</dbReference>
<dbReference type="RefSeq" id="WP_012670565.1">
    <property type="nucleotide sequence ID" value="NC_012225.1"/>
</dbReference>
<dbReference type="SMR" id="C0R078"/>
<dbReference type="STRING" id="565034.BHWA1_01033"/>
<dbReference type="GeneID" id="63962140"/>
<dbReference type="KEGG" id="bhy:BHWA1_01033"/>
<dbReference type="eggNOG" id="COG0238">
    <property type="taxonomic scope" value="Bacteria"/>
</dbReference>
<dbReference type="HOGENOM" id="CLU_148710_0_1_12"/>
<dbReference type="Proteomes" id="UP000001803">
    <property type="component" value="Chromosome"/>
</dbReference>
<dbReference type="GO" id="GO:0022627">
    <property type="term" value="C:cytosolic small ribosomal subunit"/>
    <property type="evidence" value="ECO:0007669"/>
    <property type="project" value="TreeGrafter"/>
</dbReference>
<dbReference type="GO" id="GO:0070181">
    <property type="term" value="F:small ribosomal subunit rRNA binding"/>
    <property type="evidence" value="ECO:0007669"/>
    <property type="project" value="TreeGrafter"/>
</dbReference>
<dbReference type="GO" id="GO:0003735">
    <property type="term" value="F:structural constituent of ribosome"/>
    <property type="evidence" value="ECO:0007669"/>
    <property type="project" value="InterPro"/>
</dbReference>
<dbReference type="GO" id="GO:0006412">
    <property type="term" value="P:translation"/>
    <property type="evidence" value="ECO:0007669"/>
    <property type="project" value="UniProtKB-UniRule"/>
</dbReference>
<dbReference type="Gene3D" id="4.10.640.10">
    <property type="entry name" value="Ribosomal protein S18"/>
    <property type="match status" value="1"/>
</dbReference>
<dbReference type="HAMAP" id="MF_00270">
    <property type="entry name" value="Ribosomal_bS18"/>
    <property type="match status" value="1"/>
</dbReference>
<dbReference type="InterPro" id="IPR001648">
    <property type="entry name" value="Ribosomal_bS18"/>
</dbReference>
<dbReference type="InterPro" id="IPR036870">
    <property type="entry name" value="Ribosomal_bS18_sf"/>
</dbReference>
<dbReference type="NCBIfam" id="TIGR00165">
    <property type="entry name" value="S18"/>
    <property type="match status" value="1"/>
</dbReference>
<dbReference type="PANTHER" id="PTHR13479">
    <property type="entry name" value="30S RIBOSOMAL PROTEIN S18"/>
    <property type="match status" value="1"/>
</dbReference>
<dbReference type="PANTHER" id="PTHR13479:SF40">
    <property type="entry name" value="SMALL RIBOSOMAL SUBUNIT PROTEIN BS18M"/>
    <property type="match status" value="1"/>
</dbReference>
<dbReference type="Pfam" id="PF01084">
    <property type="entry name" value="Ribosomal_S18"/>
    <property type="match status" value="1"/>
</dbReference>
<dbReference type="PRINTS" id="PR00974">
    <property type="entry name" value="RIBOSOMALS18"/>
</dbReference>
<dbReference type="SUPFAM" id="SSF46911">
    <property type="entry name" value="Ribosomal protein S18"/>
    <property type="match status" value="1"/>
</dbReference>
<proteinExistence type="inferred from homology"/>
<keyword id="KW-0687">Ribonucleoprotein</keyword>
<keyword id="KW-0689">Ribosomal protein</keyword>
<keyword id="KW-0694">RNA-binding</keyword>
<keyword id="KW-0699">rRNA-binding</keyword>
<feature type="chain" id="PRO_1000125785" description="Small ribosomal subunit protein bS18">
    <location>
        <begin position="1"/>
        <end position="111"/>
    </location>
</feature>
<feature type="region of interest" description="Disordered" evidence="2">
    <location>
        <begin position="1"/>
        <end position="32"/>
    </location>
</feature>
<feature type="compositionally biased region" description="Basic and acidic residues" evidence="2">
    <location>
        <begin position="17"/>
        <end position="32"/>
    </location>
</feature>
<organism>
    <name type="scientific">Brachyspira hyodysenteriae (strain ATCC 49526 / WA1)</name>
    <dbReference type="NCBI Taxonomy" id="565034"/>
    <lineage>
        <taxon>Bacteria</taxon>
        <taxon>Pseudomonadati</taxon>
        <taxon>Spirochaetota</taxon>
        <taxon>Spirochaetia</taxon>
        <taxon>Brachyspirales</taxon>
        <taxon>Brachyspiraceae</taxon>
        <taxon>Brachyspira</taxon>
    </lineage>
</organism>
<reference key="1">
    <citation type="journal article" date="2009" name="PLoS ONE">
        <title>Genome sequence of the pathogenic intestinal spirochete Brachyspira hyodysenteriae reveals adaptations to its lifestyle in the porcine large intestine.</title>
        <authorList>
            <person name="Bellgard M.I."/>
            <person name="Wanchanthuek P."/>
            <person name="La T."/>
            <person name="Ryan K."/>
            <person name="Moolhuijzen P."/>
            <person name="Albertyn Z."/>
            <person name="Shaban B."/>
            <person name="Motro Y."/>
            <person name="Dunn D.S."/>
            <person name="Schibeci D."/>
            <person name="Hunter A."/>
            <person name="Barrero R."/>
            <person name="Phillips N.D."/>
            <person name="Hampson D.J."/>
        </authorList>
    </citation>
    <scope>NUCLEOTIDE SEQUENCE [LARGE SCALE GENOMIC DNA]</scope>
    <source>
        <strain>ATCC 49526 / WA1</strain>
    </source>
</reference>